<sequence length="278" mass="31827">MKLCFNEATTLENSNLAKDLEYCEKHGYDYIEIRTMDKLPEYLKDHALSELAEYFQTHHIKPLALNALVFFNNRDEKGHREIIEEFKGMMETCKMLGVKYVVAVPLVTEQKILKEDIKASSVEVLTELSDIAEPYGVKIAVEFVGHPECTVNTFSQAYDIVMTVNRDNVGLVFDSFHFHAMGSSLEDLKKADGKKIFIYHIDDTEDFPIGFLRDEDRVWPGQGAIDLDAHLSTLKDIGFSDVVSVELFRPEYYKLSAEETIRTAKETTVEVVSKYFKI</sequence>
<comment type="function">
    <text evidence="1">Involved in the reversible interconverion of 2-keto-myo-inositol (2KMI, inosose or 2,4,6/3,5-pentahydroxycyclohexanone) to 1-keto-D-chiro-inositol (1KDCI or 2,3,5/4,6-pentahydroxycyclohexanone).</text>
</comment>
<comment type="catalytic activity">
    <reaction>
        <text>scyllo-inosose = scyllo-inosine</text>
        <dbReference type="Rhea" id="RHEA:25776"/>
        <dbReference type="ChEBI" id="CHEBI:17811"/>
        <dbReference type="ChEBI" id="CHEBI:50920"/>
        <dbReference type="EC" id="5.3.99.11"/>
    </reaction>
</comment>
<comment type="cofactor">
    <cofactor evidence="1">
        <name>a divalent metal cation</name>
        <dbReference type="ChEBI" id="CHEBI:60240"/>
    </cofactor>
    <text evidence="1">Binds 1 divalent metal cation per subunit.</text>
</comment>
<comment type="pathway">
    <text>Polyol metabolism; myo-inositol degradation into acetyl-CoA.</text>
</comment>
<comment type="similarity">
    <text evidence="2">Belongs to the IolI family.</text>
</comment>
<name>IOLI_BACLD</name>
<feature type="chain" id="PRO_0000352279" description="Inosose isomerase">
    <location>
        <begin position="1"/>
        <end position="278"/>
    </location>
</feature>
<feature type="binding site" evidence="1">
    <location>
        <position position="142"/>
    </location>
    <ligand>
        <name>a divalent metal cation</name>
        <dbReference type="ChEBI" id="CHEBI:60240"/>
    </ligand>
</feature>
<feature type="binding site" evidence="1">
    <location>
        <position position="174"/>
    </location>
    <ligand>
        <name>a divalent metal cation</name>
        <dbReference type="ChEBI" id="CHEBI:60240"/>
    </ligand>
</feature>
<feature type="binding site" evidence="1">
    <location>
        <position position="200"/>
    </location>
    <ligand>
        <name>a divalent metal cation</name>
        <dbReference type="ChEBI" id="CHEBI:60240"/>
    </ligand>
</feature>
<feature type="binding site" evidence="1">
    <location>
        <position position="246"/>
    </location>
    <ligand>
        <name>a divalent metal cation</name>
        <dbReference type="ChEBI" id="CHEBI:60240"/>
    </ligand>
</feature>
<protein>
    <recommendedName>
        <fullName>Inosose isomerase</fullName>
        <ecNumber>5.3.99.11</ecNumber>
    </recommendedName>
    <alternativeName>
        <fullName>2-keto-myo-inositol isomerase</fullName>
        <shortName>2KMI isomerase</shortName>
    </alternativeName>
</protein>
<accession>Q65D08</accession>
<accession>Q62NI4</accession>
<gene>
    <name type="primary">iolI</name>
    <name type="ordered locus">BLi04243</name>
    <name type="ordered locus">BL00238</name>
</gene>
<reference key="1">
    <citation type="journal article" date="2004" name="J. Mol. Microbiol. Biotechnol.">
        <title>The complete genome sequence of Bacillus licheniformis DSM13, an organism with great industrial potential.</title>
        <authorList>
            <person name="Veith B."/>
            <person name="Herzberg C."/>
            <person name="Steckel S."/>
            <person name="Feesche J."/>
            <person name="Maurer K.H."/>
            <person name="Ehrenreich P."/>
            <person name="Baeumer S."/>
            <person name="Henne A."/>
            <person name="Liesegang H."/>
            <person name="Merkl R."/>
            <person name="Ehrenreich A."/>
            <person name="Gottschalk G."/>
        </authorList>
    </citation>
    <scope>NUCLEOTIDE SEQUENCE [LARGE SCALE GENOMIC DNA]</scope>
    <source>
        <strain>ATCC 14580 / DSM 13 / JCM 2505 / CCUG 7422 / NBRC 12200 / NCIMB 9375 / NCTC 10341 / NRRL NRS-1264 / Gibson 46</strain>
    </source>
</reference>
<reference key="2">
    <citation type="journal article" date="2004" name="Genome Biol.">
        <title>Complete genome sequence of the industrial bacterium Bacillus licheniformis and comparisons with closely related Bacillus species.</title>
        <authorList>
            <person name="Rey M.W."/>
            <person name="Ramaiya P."/>
            <person name="Nelson B.A."/>
            <person name="Brody-Karpin S.D."/>
            <person name="Zaretsky E.J."/>
            <person name="Tang M."/>
            <person name="Lopez de Leon A."/>
            <person name="Xiang H."/>
            <person name="Gusti V."/>
            <person name="Clausen I.G."/>
            <person name="Olsen P.B."/>
            <person name="Rasmussen M.D."/>
            <person name="Andersen J.T."/>
            <person name="Joergensen P.L."/>
            <person name="Larsen T.S."/>
            <person name="Sorokin A."/>
            <person name="Bolotin A."/>
            <person name="Lapidus A."/>
            <person name="Galleron N."/>
            <person name="Ehrlich S.D."/>
            <person name="Berka R.M."/>
        </authorList>
    </citation>
    <scope>NUCLEOTIDE SEQUENCE [LARGE SCALE GENOMIC DNA]</scope>
    <source>
        <strain>ATCC 14580 / DSM 13 / JCM 2505 / CCUG 7422 / NBRC 12200 / NCIMB 9375 / NCTC 10341 / NRRL NRS-1264 / Gibson 46</strain>
    </source>
</reference>
<evidence type="ECO:0000250" key="1"/>
<evidence type="ECO:0000305" key="2"/>
<dbReference type="EC" id="5.3.99.11"/>
<dbReference type="EMBL" id="CP000002">
    <property type="protein sequence ID" value="AAU25677.1"/>
    <property type="molecule type" value="Genomic_DNA"/>
</dbReference>
<dbReference type="EMBL" id="AE017333">
    <property type="protein sequence ID" value="AAU43056.1"/>
    <property type="molecule type" value="Genomic_DNA"/>
</dbReference>
<dbReference type="RefSeq" id="WP_003177805.1">
    <property type="nucleotide sequence ID" value="NC_006322.1"/>
</dbReference>
<dbReference type="SMR" id="Q65D08"/>
<dbReference type="STRING" id="279010.BL00238"/>
<dbReference type="GeneID" id="92859187"/>
<dbReference type="KEGG" id="bld:BLi04243"/>
<dbReference type="KEGG" id="bli:BL00238"/>
<dbReference type="eggNOG" id="COG1082">
    <property type="taxonomic scope" value="Bacteria"/>
</dbReference>
<dbReference type="HOGENOM" id="CLU_035063_3_0_9"/>
<dbReference type="UniPathway" id="UPA00076"/>
<dbReference type="Proteomes" id="UP000000606">
    <property type="component" value="Chromosome"/>
</dbReference>
<dbReference type="GO" id="GO:0016853">
    <property type="term" value="F:isomerase activity"/>
    <property type="evidence" value="ECO:0007669"/>
    <property type="project" value="UniProtKB-KW"/>
</dbReference>
<dbReference type="GO" id="GO:0046872">
    <property type="term" value="F:metal ion binding"/>
    <property type="evidence" value="ECO:0007669"/>
    <property type="project" value="UniProtKB-KW"/>
</dbReference>
<dbReference type="Gene3D" id="3.20.20.150">
    <property type="entry name" value="Divalent-metal-dependent TIM barrel enzymes"/>
    <property type="match status" value="1"/>
</dbReference>
<dbReference type="InterPro" id="IPR050312">
    <property type="entry name" value="IolE/XylAMocC-like"/>
</dbReference>
<dbReference type="InterPro" id="IPR036237">
    <property type="entry name" value="Xyl_isomerase-like_sf"/>
</dbReference>
<dbReference type="InterPro" id="IPR013022">
    <property type="entry name" value="Xyl_isomerase-like_TIM-brl"/>
</dbReference>
<dbReference type="PANTHER" id="PTHR12110">
    <property type="entry name" value="HYDROXYPYRUVATE ISOMERASE"/>
    <property type="match status" value="1"/>
</dbReference>
<dbReference type="PANTHER" id="PTHR12110:SF21">
    <property type="entry name" value="XYLOSE ISOMERASE-LIKE TIM BARREL DOMAIN-CONTAINING PROTEIN"/>
    <property type="match status" value="1"/>
</dbReference>
<dbReference type="Pfam" id="PF01261">
    <property type="entry name" value="AP_endonuc_2"/>
    <property type="match status" value="1"/>
</dbReference>
<dbReference type="SUPFAM" id="SSF51658">
    <property type="entry name" value="Xylose isomerase-like"/>
    <property type="match status" value="1"/>
</dbReference>
<keyword id="KW-0413">Isomerase</keyword>
<keyword id="KW-0479">Metal-binding</keyword>
<keyword id="KW-1185">Reference proteome</keyword>
<proteinExistence type="inferred from homology"/>
<organism>
    <name type="scientific">Bacillus licheniformis (strain ATCC 14580 / DSM 13 / JCM 2505 / CCUG 7422 / NBRC 12200 / NCIMB 9375 / NCTC 10341 / NRRL NRS-1264 / Gibson 46)</name>
    <dbReference type="NCBI Taxonomy" id="279010"/>
    <lineage>
        <taxon>Bacteria</taxon>
        <taxon>Bacillati</taxon>
        <taxon>Bacillota</taxon>
        <taxon>Bacilli</taxon>
        <taxon>Bacillales</taxon>
        <taxon>Bacillaceae</taxon>
        <taxon>Bacillus</taxon>
    </lineage>
</organism>